<name>RBE11_LITRU</name>
<accession>P82070</accession>
<evidence type="ECO:0000269" key="1">
    <source ref="1"/>
</evidence>
<protein>
    <recommendedName>
        <fullName>Rubellidin-1.1</fullName>
    </recommendedName>
</protein>
<organism>
    <name type="scientific">Litoria rubella</name>
    <name type="common">Desert tree frog</name>
    <name type="synonym">Hyla rubella</name>
    <dbReference type="NCBI Taxonomy" id="104895"/>
    <lineage>
        <taxon>Eukaryota</taxon>
        <taxon>Metazoa</taxon>
        <taxon>Chordata</taxon>
        <taxon>Craniata</taxon>
        <taxon>Vertebrata</taxon>
        <taxon>Euteleostomi</taxon>
        <taxon>Amphibia</taxon>
        <taxon>Batrachia</taxon>
        <taxon>Anura</taxon>
        <taxon>Neobatrachia</taxon>
        <taxon>Hyloidea</taxon>
        <taxon>Hylidae</taxon>
        <taxon>Pelodryadinae</taxon>
        <taxon>Litoria</taxon>
    </lineage>
</organism>
<dbReference type="GO" id="GO:0005576">
    <property type="term" value="C:extracellular region"/>
    <property type="evidence" value="ECO:0007669"/>
    <property type="project" value="UniProtKB-SubCell"/>
</dbReference>
<dbReference type="GO" id="GO:0006952">
    <property type="term" value="P:defense response"/>
    <property type="evidence" value="ECO:0007669"/>
    <property type="project" value="UniProtKB-KW"/>
</dbReference>
<reference key="1">
    <citation type="journal article" date="1996" name="Aust. J. Chem.">
        <title>The structure of new peptides from the Australin red tree frog 'Litoria rubella'. The skin peptide profile as a probe for the study of evolutionary trends of amphibians.</title>
        <authorList>
            <person name="Steinborner S.T."/>
            <person name="Wabnitz P.A."/>
            <person name="Waugh R.J."/>
            <person name="Bowie J.H."/>
            <person name="Gao C."/>
            <person name="Tyler M.J."/>
            <person name="Wallace J.C."/>
        </authorList>
    </citation>
    <scope>PROTEIN SEQUENCE</scope>
    <scope>MASS SPECTROMETRY</scope>
    <source>
        <tissue>Skin secretion</tissue>
    </source>
</reference>
<sequence>VDFFA</sequence>
<keyword id="KW-0878">Amphibian defense peptide</keyword>
<keyword id="KW-0903">Direct protein sequencing</keyword>
<keyword id="KW-0964">Secreted</keyword>
<comment type="function">
    <text>Shows neither neuropeptide activity nor antibiotic activity.</text>
</comment>
<comment type="subcellular location">
    <subcellularLocation>
        <location>Secreted</location>
    </subcellularLocation>
</comment>
<comment type="tissue specificity">
    <text>Expressed by the skin dorsal glands.</text>
</comment>
<comment type="mass spectrometry"/>
<feature type="peptide" id="PRO_0000043832" description="Rubellidin-1.1">
    <location>
        <begin position="1"/>
        <end position="5"/>
    </location>
</feature>
<proteinExistence type="evidence at protein level"/>